<protein>
    <recommendedName>
        <fullName>Conotoxin VnMKLT1-012</fullName>
    </recommendedName>
</protein>
<accession>Q9BPA3</accession>
<reference key="1">
    <citation type="journal article" date="2001" name="Mol. Biol. Evol.">
        <title>Mechanisms for evolving hypervariability: the case of conopeptides.</title>
        <authorList>
            <person name="Conticello S.G."/>
            <person name="Gilad Y."/>
            <person name="Avidan N."/>
            <person name="Ben-Asher E."/>
            <person name="Levy Z."/>
            <person name="Fainzilber M."/>
        </authorList>
    </citation>
    <scope>NUCLEOTIDE SEQUENCE [MRNA]</scope>
    <source>
        <tissue>Venom duct</tissue>
    </source>
</reference>
<name>O1610_CONVE</name>
<organism>
    <name type="scientific">Conus ventricosus</name>
    <name type="common">Mediterranean cone</name>
    <dbReference type="NCBI Taxonomy" id="117992"/>
    <lineage>
        <taxon>Eukaryota</taxon>
        <taxon>Metazoa</taxon>
        <taxon>Spiralia</taxon>
        <taxon>Lophotrochozoa</taxon>
        <taxon>Mollusca</taxon>
        <taxon>Gastropoda</taxon>
        <taxon>Caenogastropoda</taxon>
        <taxon>Neogastropoda</taxon>
        <taxon>Conoidea</taxon>
        <taxon>Conidae</taxon>
        <taxon>Conus</taxon>
        <taxon>Lautoconus</taxon>
    </lineage>
</organism>
<keyword id="KW-0165">Cleavage on pair of basic residues</keyword>
<keyword id="KW-1015">Disulfide bond</keyword>
<keyword id="KW-0960">Knottin</keyword>
<keyword id="KW-0528">Neurotoxin</keyword>
<keyword id="KW-0964">Secreted</keyword>
<keyword id="KW-0732">Signal</keyword>
<keyword id="KW-0800">Toxin</keyword>
<comment type="subcellular location">
    <subcellularLocation>
        <location evidence="1">Secreted</location>
    </subcellularLocation>
</comment>
<comment type="tissue specificity">
    <text>Expressed by the venom duct.</text>
</comment>
<comment type="domain">
    <text evidence="1">The presence of a 'disulfide through disulfide knot' structurally defines this protein as a knottin.</text>
</comment>
<comment type="domain">
    <text>The cysteine framework is VI/VII (C-C-CC-C-C).</text>
</comment>
<comment type="similarity">
    <text evidence="3">Belongs to the conotoxin O1 superfamily.</text>
</comment>
<feature type="signal peptide" evidence="2">
    <location>
        <begin position="1"/>
        <end position="22"/>
    </location>
</feature>
<feature type="propeptide" id="PRO_0000404716" evidence="1">
    <location>
        <begin position="23"/>
        <end position="48"/>
    </location>
</feature>
<feature type="peptide" id="PRO_0000404717" description="Conotoxin VnMKLT1-012">
    <location>
        <begin position="51"/>
        <end position="77"/>
    </location>
</feature>
<feature type="disulfide bond" evidence="1">
    <location>
        <begin position="51"/>
        <end position="68"/>
    </location>
</feature>
<feature type="disulfide bond" evidence="1">
    <location>
        <begin position="58"/>
        <end position="72"/>
    </location>
</feature>
<feature type="disulfide bond" evidence="1">
    <location>
        <begin position="67"/>
        <end position="76"/>
    </location>
</feature>
<dbReference type="EMBL" id="AF215034">
    <property type="protein sequence ID" value="AAG60462.1"/>
    <property type="molecule type" value="mRNA"/>
</dbReference>
<dbReference type="SMR" id="Q9BPA3"/>
<dbReference type="ConoServer" id="721">
    <property type="toxin name" value="Vn6.10 precursor"/>
</dbReference>
<dbReference type="GO" id="GO:0005576">
    <property type="term" value="C:extracellular region"/>
    <property type="evidence" value="ECO:0007669"/>
    <property type="project" value="UniProtKB-SubCell"/>
</dbReference>
<dbReference type="GO" id="GO:0008200">
    <property type="term" value="F:ion channel inhibitor activity"/>
    <property type="evidence" value="ECO:0007669"/>
    <property type="project" value="InterPro"/>
</dbReference>
<dbReference type="GO" id="GO:0090729">
    <property type="term" value="F:toxin activity"/>
    <property type="evidence" value="ECO:0007669"/>
    <property type="project" value="UniProtKB-KW"/>
</dbReference>
<dbReference type="InterPro" id="IPR004214">
    <property type="entry name" value="Conotoxin"/>
</dbReference>
<dbReference type="Pfam" id="PF02950">
    <property type="entry name" value="Conotoxin"/>
    <property type="match status" value="1"/>
</dbReference>
<proteinExistence type="evidence at transcript level"/>
<sequence>MKLTCMMIVAVLFLTAWTFVTADDSRNGLDYLFPKARHEMNPKASRDIKRCRPGGMICGFPKPGPYCCSGWCFVVCL</sequence>
<evidence type="ECO:0000250" key="1"/>
<evidence type="ECO:0000255" key="2"/>
<evidence type="ECO:0000305" key="3"/>